<keyword id="KW-0025">Alternative splicing</keyword>
<keyword id="KW-0968">Cytoplasmic vesicle</keyword>
<keyword id="KW-0256">Endoplasmic reticulum</keyword>
<keyword id="KW-0333">Golgi apparatus</keyword>
<keyword id="KW-1185">Reference proteome</keyword>
<dbReference type="EMBL" id="AF437883">
    <property type="protein sequence ID" value="AAQ04480.3"/>
    <property type="molecule type" value="mRNA"/>
</dbReference>
<dbReference type="EMBL" id="AF439399">
    <property type="protein sequence ID" value="AAQ04549.1"/>
    <property type="status" value="ALT_INIT"/>
    <property type="molecule type" value="mRNA"/>
</dbReference>
<dbReference type="EMBL" id="DQ227570">
    <property type="protein sequence ID" value="ABB13523.1"/>
    <property type="molecule type" value="mRNA"/>
</dbReference>
<dbReference type="EMBL" id="AC114803">
    <property type="status" value="NOT_ANNOTATED_CDS"/>
    <property type="molecule type" value="Genomic_DNA"/>
</dbReference>
<dbReference type="CCDS" id="CCDS33382.2">
    <molecule id="Q5W5W9-2"/>
</dbReference>
<dbReference type="RefSeq" id="NP_001007090.3">
    <molecule id="Q5W5W9-2"/>
    <property type="nucleotide sequence ID" value="NM_001007089.4"/>
</dbReference>
<dbReference type="RefSeq" id="XP_011509467.1">
    <property type="nucleotide sequence ID" value="XM_011511165.2"/>
</dbReference>
<dbReference type="RefSeq" id="XP_024308649.2">
    <molecule id="Q5W5W9-3"/>
    <property type="nucleotide sequence ID" value="XM_024452881.2"/>
</dbReference>
<dbReference type="RefSeq" id="XP_054197956.1">
    <molecule id="Q5W5W9-3"/>
    <property type="nucleotide sequence ID" value="XM_054341981.1"/>
</dbReference>
<dbReference type="FunCoup" id="Q5W5W9">
    <property type="interactions" value="26"/>
</dbReference>
<dbReference type="STRING" id="9606.ENSP00000330269"/>
<dbReference type="GlyGen" id="Q5W5W9">
    <property type="glycosylation" value="1 site, 1 O-linked glycan (1 site)"/>
</dbReference>
<dbReference type="iPTMnet" id="Q5W5W9"/>
<dbReference type="PhosphoSitePlus" id="Q5W5W9"/>
<dbReference type="BioMuta" id="RESP18"/>
<dbReference type="PaxDb" id="9606-ENSP00000330269"/>
<dbReference type="ProteomicsDB" id="65807">
    <molecule id="Q5W5W9-1"/>
</dbReference>
<dbReference type="ProteomicsDB" id="65808">
    <molecule id="Q5W5W9-2"/>
</dbReference>
<dbReference type="ProteomicsDB" id="65809">
    <molecule id="Q5W5W9-3"/>
</dbReference>
<dbReference type="Antibodypedia" id="52248">
    <property type="antibodies" value="7 antibodies from 6 providers"/>
</dbReference>
<dbReference type="DNASU" id="389075"/>
<dbReference type="Ensembl" id="ENST00000333527.6">
    <molecule id="Q5W5W9-2"/>
    <property type="protein sequence ID" value="ENSP00000330269.5"/>
    <property type="gene ID" value="ENSG00000182698.12"/>
</dbReference>
<dbReference type="Ensembl" id="ENST00000392083.5">
    <molecule id="Q5W5W9-1"/>
    <property type="protein sequence ID" value="ENSP00000375933.1"/>
    <property type="gene ID" value="ENSG00000182698.12"/>
</dbReference>
<dbReference type="GeneID" id="389075"/>
<dbReference type="KEGG" id="hsa:389075"/>
<dbReference type="MANE-Select" id="ENST00000333527.6">
    <property type="protein sequence ID" value="ENSP00000330269.5"/>
    <property type="RefSeq nucleotide sequence ID" value="NM_001007089.4"/>
    <property type="RefSeq protein sequence ID" value="NP_001007090.3"/>
</dbReference>
<dbReference type="UCSC" id="uc002vlc.4">
    <molecule id="Q5W5W9-2"/>
    <property type="organism name" value="human"/>
</dbReference>
<dbReference type="AGR" id="HGNC:33762"/>
<dbReference type="CTD" id="389075"/>
<dbReference type="DisGeNET" id="389075"/>
<dbReference type="GeneCards" id="RESP18"/>
<dbReference type="HGNC" id="HGNC:33762">
    <property type="gene designation" value="RESP18"/>
</dbReference>
<dbReference type="HPA" id="ENSG00000182698">
    <property type="expression patterns" value="Tissue enriched (brain)"/>
</dbReference>
<dbReference type="MIM" id="612721">
    <property type="type" value="gene"/>
</dbReference>
<dbReference type="neXtProt" id="NX_Q5W5W9"/>
<dbReference type="OpenTargets" id="ENSG00000182698"/>
<dbReference type="VEuPathDB" id="HostDB:ENSG00000182698"/>
<dbReference type="eggNOG" id="KOG0793">
    <property type="taxonomic scope" value="Eukaryota"/>
</dbReference>
<dbReference type="GeneTree" id="ENSGT00390000008124"/>
<dbReference type="HOGENOM" id="CLU_106769_0_0_1"/>
<dbReference type="InParanoid" id="Q5W5W9"/>
<dbReference type="OMA" id="GRIQHPL"/>
<dbReference type="OrthoDB" id="9837799at2759"/>
<dbReference type="PAN-GO" id="Q5W5W9">
    <property type="GO annotations" value="1 GO annotation based on evolutionary models"/>
</dbReference>
<dbReference type="PhylomeDB" id="Q5W5W9"/>
<dbReference type="TreeFam" id="TF338242"/>
<dbReference type="BioGRID-ORCS" id="389075">
    <property type="hits" value="11 hits in 1144 CRISPR screens"/>
</dbReference>
<dbReference type="GenomeRNAi" id="389075"/>
<dbReference type="Pharos" id="Q5W5W9">
    <property type="development level" value="Tdark"/>
</dbReference>
<dbReference type="PRO" id="PR:Q5W5W9"/>
<dbReference type="Proteomes" id="UP000005640">
    <property type="component" value="Chromosome 2"/>
</dbReference>
<dbReference type="RNAct" id="Q5W5W9">
    <property type="molecule type" value="protein"/>
</dbReference>
<dbReference type="Bgee" id="ENSG00000182698">
    <property type="expression patterns" value="Expressed in nucleus accumbens and 35 other cell types or tissues"/>
</dbReference>
<dbReference type="GO" id="GO:0031410">
    <property type="term" value="C:cytoplasmic vesicle"/>
    <property type="evidence" value="ECO:0007669"/>
    <property type="project" value="UniProtKB-KW"/>
</dbReference>
<dbReference type="GO" id="GO:0005783">
    <property type="term" value="C:endoplasmic reticulum"/>
    <property type="evidence" value="ECO:0000318"/>
    <property type="project" value="GO_Central"/>
</dbReference>
<dbReference type="GO" id="GO:0005794">
    <property type="term" value="C:Golgi apparatus"/>
    <property type="evidence" value="ECO:0007669"/>
    <property type="project" value="UniProtKB-SubCell"/>
</dbReference>
<dbReference type="InterPro" id="IPR024833">
    <property type="entry name" value="RESP18"/>
</dbReference>
<dbReference type="InterPro" id="IPR029403">
    <property type="entry name" value="RESP18_dom"/>
</dbReference>
<dbReference type="PANTHER" id="PTHR17314">
    <property type="entry name" value="REGULATED ENDOCRINE SPECIFIC PROTEIN 18"/>
    <property type="match status" value="1"/>
</dbReference>
<dbReference type="PANTHER" id="PTHR17314:SF0">
    <property type="entry name" value="REGULATED ENDOCRINE-SPECIFIC PROTEIN 18"/>
    <property type="match status" value="1"/>
</dbReference>
<dbReference type="Pfam" id="PF14948">
    <property type="entry name" value="RESP18"/>
    <property type="match status" value="1"/>
</dbReference>
<dbReference type="SMART" id="SM01305">
    <property type="entry name" value="RESP18"/>
    <property type="match status" value="1"/>
</dbReference>
<accession>Q5W5W9</accession>
<accession>A8MQ49</accession>
<accession>Q38I23</accession>
<accession>Q5W5X0</accession>
<reference key="1">
    <citation type="journal article" date="2007" name="J. Endocrinol.">
        <title>RESP18, a homolog of the luminal domain IA-2, is found in dense core vesicles in pancreatic islet cells and is induced by high glucose.</title>
        <authorList>
            <person name="Zhang G."/>
            <person name="Hirai H."/>
            <person name="Cai T."/>
            <person name="Miura J."/>
            <person name="Yu P."/>
            <person name="Huang H."/>
            <person name="Schiller M.R."/>
            <person name="Swaim W.D."/>
            <person name="Leapman R.D."/>
            <person name="Notkins A.L."/>
        </authorList>
    </citation>
    <scope>NUCLEOTIDE SEQUENCE [MRNA] (ISOFORMS 1; 2 AND 3)</scope>
    <scope>TISSUE SPECIFICITY</scope>
    <source>
        <tissue>Pancreas</tissue>
    </source>
</reference>
<reference key="2">
    <citation type="journal article" date="2005" name="Nature">
        <title>Generation and annotation of the DNA sequences of human chromosomes 2 and 4.</title>
        <authorList>
            <person name="Hillier L.W."/>
            <person name="Graves T.A."/>
            <person name="Fulton R.S."/>
            <person name="Fulton L.A."/>
            <person name="Pepin K.H."/>
            <person name="Minx P."/>
            <person name="Wagner-McPherson C."/>
            <person name="Layman D."/>
            <person name="Wylie K."/>
            <person name="Sekhon M."/>
            <person name="Becker M.C."/>
            <person name="Fewell G.A."/>
            <person name="Delehaunty K.D."/>
            <person name="Miner T.L."/>
            <person name="Nash W.E."/>
            <person name="Kremitzki C."/>
            <person name="Oddy L."/>
            <person name="Du H."/>
            <person name="Sun H."/>
            <person name="Bradshaw-Cordum H."/>
            <person name="Ali J."/>
            <person name="Carter J."/>
            <person name="Cordes M."/>
            <person name="Harris A."/>
            <person name="Isak A."/>
            <person name="van Brunt A."/>
            <person name="Nguyen C."/>
            <person name="Du F."/>
            <person name="Courtney L."/>
            <person name="Kalicki J."/>
            <person name="Ozersky P."/>
            <person name="Abbott S."/>
            <person name="Armstrong J."/>
            <person name="Belter E.A."/>
            <person name="Caruso L."/>
            <person name="Cedroni M."/>
            <person name="Cotton M."/>
            <person name="Davidson T."/>
            <person name="Desai A."/>
            <person name="Elliott G."/>
            <person name="Erb T."/>
            <person name="Fronick C."/>
            <person name="Gaige T."/>
            <person name="Haakenson W."/>
            <person name="Haglund K."/>
            <person name="Holmes A."/>
            <person name="Harkins R."/>
            <person name="Kim K."/>
            <person name="Kruchowski S.S."/>
            <person name="Strong C.M."/>
            <person name="Grewal N."/>
            <person name="Goyea E."/>
            <person name="Hou S."/>
            <person name="Levy A."/>
            <person name="Martinka S."/>
            <person name="Mead K."/>
            <person name="McLellan M.D."/>
            <person name="Meyer R."/>
            <person name="Randall-Maher J."/>
            <person name="Tomlinson C."/>
            <person name="Dauphin-Kohlberg S."/>
            <person name="Kozlowicz-Reilly A."/>
            <person name="Shah N."/>
            <person name="Swearengen-Shahid S."/>
            <person name="Snider J."/>
            <person name="Strong J.T."/>
            <person name="Thompson J."/>
            <person name="Yoakum M."/>
            <person name="Leonard S."/>
            <person name="Pearman C."/>
            <person name="Trani L."/>
            <person name="Radionenko M."/>
            <person name="Waligorski J.E."/>
            <person name="Wang C."/>
            <person name="Rock S.M."/>
            <person name="Tin-Wollam A.-M."/>
            <person name="Maupin R."/>
            <person name="Latreille P."/>
            <person name="Wendl M.C."/>
            <person name="Yang S.-P."/>
            <person name="Pohl C."/>
            <person name="Wallis J.W."/>
            <person name="Spieth J."/>
            <person name="Bieri T.A."/>
            <person name="Berkowicz N."/>
            <person name="Nelson J.O."/>
            <person name="Osborne J."/>
            <person name="Ding L."/>
            <person name="Meyer R."/>
            <person name="Sabo A."/>
            <person name="Shotland Y."/>
            <person name="Sinha P."/>
            <person name="Wohldmann P.E."/>
            <person name="Cook L.L."/>
            <person name="Hickenbotham M.T."/>
            <person name="Eldred J."/>
            <person name="Williams D."/>
            <person name="Jones T.A."/>
            <person name="She X."/>
            <person name="Ciccarelli F.D."/>
            <person name="Izaurralde E."/>
            <person name="Taylor J."/>
            <person name="Schmutz J."/>
            <person name="Myers R.M."/>
            <person name="Cox D.R."/>
            <person name="Huang X."/>
            <person name="McPherson J.D."/>
            <person name="Mardis E.R."/>
            <person name="Clifton S.W."/>
            <person name="Warren W.C."/>
            <person name="Chinwalla A.T."/>
            <person name="Eddy S.R."/>
            <person name="Marra M.A."/>
            <person name="Ovcharenko I."/>
            <person name="Furey T.S."/>
            <person name="Miller W."/>
            <person name="Eichler E.E."/>
            <person name="Bork P."/>
            <person name="Suyama M."/>
            <person name="Torrents D."/>
            <person name="Waterston R.H."/>
            <person name="Wilson R.K."/>
        </authorList>
    </citation>
    <scope>NUCLEOTIDE SEQUENCE [LARGE SCALE GENOMIC DNA]</scope>
</reference>
<sequence>MAVDVEFGVAGWWEAAAPLSPSAVAATFTETWPGSERAEPGRIQHPLWPGSSEGLQLLVCFLLLNSCPGGCSDTSAHDGQDQVGVGQLWPLQGFATPVFQHLQVVLQQIIPQGLFWKDDITQDAMIQKMEHASRLHPQEPCLKDGKALFPTKTTESPLAKVNRDQCFTSEVVSKALKQEVANPVKITYRCSYGGLDMMQAPGPSKEEIIYKIMRLLWATSYCGPQPCG</sequence>
<comment type="function">
    <text evidence="1">May play an important regulatory role in corticotrophs.</text>
</comment>
<comment type="subcellular location">
    <subcellularLocation>
        <location evidence="3">Endoplasmic reticulum</location>
    </subcellularLocation>
    <subcellularLocation>
        <location evidence="3">Golgi apparatus</location>
    </subcellularLocation>
    <subcellularLocation>
        <location evidence="3">Cytoplasmic vesicle</location>
        <location evidence="3">Secretory vesicle lumen</location>
    </subcellularLocation>
    <text evidence="2 3">Found in the lumen of secretory vesicles (dense core vesicles, DCV). However, seems to be retained intracellularly and not secreted.</text>
</comment>
<comment type="alternative products">
    <event type="alternative splicing"/>
    <isoform>
        <id>Q5W5W9-2</id>
        <name>2</name>
        <name>B</name>
        <sequence type="displayed"/>
    </isoform>
    <isoform>
        <id>Q5W5W9-1</id>
        <name>1</name>
        <name>A</name>
        <sequence type="described" ref="VSP_059544 VSP_059547 VSP_059548 VSP_059549"/>
    </isoform>
    <isoform>
        <id>Q5W5W9-3</id>
        <name>3</name>
        <name>C</name>
        <sequence type="described" ref="VSP_059545 VSP_059546"/>
    </isoform>
</comment>
<comment type="tissue specificity">
    <text evidence="4">Pancreas. Found in alpha, beta and delta cells in the pancreatic islets.</text>
</comment>
<comment type="miscellaneous">
    <molecule>Isoform 3</molecule>
    <text evidence="5">May be due to intron retention.</text>
</comment>
<comment type="similarity">
    <text evidence="5">Belongs to the RESP18 family.</text>
</comment>
<comment type="sequence caution" evidence="5">
    <conflict type="erroneous initiation">
        <sequence resource="EMBL-CDS" id="AAQ04549"/>
    </conflict>
    <text>Extended N-terminus.</text>
</comment>
<feature type="chain" id="PRO_0000336992" description="Regulated endocrine-specific protein 18">
    <location>
        <begin position="1"/>
        <end position="228"/>
    </location>
</feature>
<feature type="splice variant" id="VSP_059544" description="In isoform 1." evidence="5">
    <location>
        <begin position="1"/>
        <end position="124"/>
    </location>
</feature>
<feature type="splice variant" id="VSP_059545" description="In isoform 3." evidence="5">
    <location>
        <begin position="1"/>
        <end position="60"/>
    </location>
</feature>
<feature type="splice variant" id="VSP_059546" description="In isoform 3." evidence="5">
    <original>FLLLNSCPGGCSDTSAH</original>
    <variation>MWKALARFLADTTILPL</variation>
    <location>
        <begin position="61"/>
        <end position="77"/>
    </location>
</feature>
<feature type="splice variant" id="VSP_059547" description="In isoform 1." evidence="5">
    <original>E</original>
    <variation>EQEEKLQLLFPSETH</variation>
    <location>
        <position position="155"/>
    </location>
</feature>
<feature type="splice variant" id="VSP_059548" description="In isoform 1." evidence="5">
    <original>ITYRCSYGGLDMMQAP</original>
    <variation>GFSGPLPTVGRNPVAD</variation>
    <location>
        <begin position="186"/>
        <end position="201"/>
    </location>
</feature>
<feature type="splice variant" id="VSP_059549" description="In isoform 1." evidence="5">
    <location>
        <begin position="202"/>
        <end position="228"/>
    </location>
</feature>
<evidence type="ECO:0000250" key="1"/>
<evidence type="ECO:0000250" key="2">
    <source>
        <dbReference type="UniProtKB" id="P47939"/>
    </source>
</evidence>
<evidence type="ECO:0000250" key="3">
    <source>
        <dbReference type="UniProtKB" id="P47940"/>
    </source>
</evidence>
<evidence type="ECO:0000269" key="4">
    <source>
    </source>
</evidence>
<evidence type="ECO:0000305" key="5"/>
<organism>
    <name type="scientific">Homo sapiens</name>
    <name type="common">Human</name>
    <dbReference type="NCBI Taxonomy" id="9606"/>
    <lineage>
        <taxon>Eukaryota</taxon>
        <taxon>Metazoa</taxon>
        <taxon>Chordata</taxon>
        <taxon>Craniata</taxon>
        <taxon>Vertebrata</taxon>
        <taxon>Euteleostomi</taxon>
        <taxon>Mammalia</taxon>
        <taxon>Eutheria</taxon>
        <taxon>Euarchontoglires</taxon>
        <taxon>Primates</taxon>
        <taxon>Haplorrhini</taxon>
        <taxon>Catarrhini</taxon>
        <taxon>Hominidae</taxon>
        <taxon>Homo</taxon>
    </lineage>
</organism>
<gene>
    <name type="primary">RESP18</name>
</gene>
<name>RES18_HUMAN</name>
<protein>
    <recommendedName>
        <fullName>Regulated endocrine-specific protein 18</fullName>
    </recommendedName>
</protein>
<proteinExistence type="evidence at transcript level"/>